<keyword id="KW-0067">ATP-binding</keyword>
<keyword id="KW-0963">Cytoplasm</keyword>
<keyword id="KW-0418">Kinase</keyword>
<keyword id="KW-0496">Mitochondrion</keyword>
<keyword id="KW-0547">Nucleotide-binding</keyword>
<keyword id="KW-1185">Reference proteome</keyword>
<keyword id="KW-0808">Transferase</keyword>
<comment type="function">
    <text evidence="1">Catalyzes the reversible transfer of the terminal phosphate group between ATP and AMP. Plays an important role in cellular energy homeostasis and in adenine nucleotide metabolism. Adenylate kinase activity is critical for regulation of the phosphate utilization and the AMP de novo biosynthesis pathways.</text>
</comment>
<comment type="catalytic activity">
    <reaction evidence="1">
        <text>AMP + ATP = 2 ADP</text>
        <dbReference type="Rhea" id="RHEA:12973"/>
        <dbReference type="ChEBI" id="CHEBI:30616"/>
        <dbReference type="ChEBI" id="CHEBI:456215"/>
        <dbReference type="ChEBI" id="CHEBI:456216"/>
        <dbReference type="EC" id="2.7.4.3"/>
    </reaction>
</comment>
<comment type="subunit">
    <text evidence="1">Monomer.</text>
</comment>
<comment type="subcellular location">
    <subcellularLocation>
        <location evidence="1">Cytoplasm</location>
        <location evidence="1">Cytosol</location>
    </subcellularLocation>
    <subcellularLocation>
        <location evidence="1 2">Mitochondrion intermembrane space</location>
    </subcellularLocation>
    <text>Predominantly mitochondrial.</text>
</comment>
<comment type="domain">
    <text evidence="1">Consists of three domains, a large central CORE domain and two small peripheral domains, NMPbind and LID, which undergo movements during catalysis. The LID domain closes over the site of phosphoryl transfer upon ATP binding. Assembling and dissambling the active center during each catalytic cycle provides an effective means to prevent ATP hydrolysis.</text>
</comment>
<comment type="similarity">
    <text evidence="1">Belongs to the adenylate kinase family. AK2 subfamily.</text>
</comment>
<gene>
    <name type="primary">adk-1</name>
    <name type="ORF">B21O8.10</name>
    <name type="ORF">NCU01550</name>
</gene>
<sequence length="278" mass="30286">MGFIDDEVKRLGDVIASLEDRVRSLETRDFSGKPVTTAEQLRMVLMGPPGAGKGTQAPKIKEKFNCCHLATGDMLRAQVAKGTALGKQAKKIMNEGGLVSDDIVIGMIKDELENNKECQGGFILDGFPRTVPQAEGLDAMLRERNLPLQHAVELKIDDSLLVARITGRLVHPASGRSYHRIFNPPKDDMKDDITGEPLVQRSDDNAEALRKRLETYHKQTAPVVGYYQNTGIWKAIDASQEPAQVWKSLLAIFEGDKAKASSAGSGIMSKIASAAKSS</sequence>
<name>KAD2_NEUCR</name>
<proteinExistence type="evidence at protein level"/>
<reference key="1">
    <citation type="journal article" date="2003" name="Nucleic Acids Res.">
        <title>What's in the genome of a filamentous fungus? Analysis of the Neurospora genome sequence.</title>
        <authorList>
            <person name="Mannhaupt G."/>
            <person name="Montrone C."/>
            <person name="Haase D."/>
            <person name="Mewes H.-W."/>
            <person name="Aign V."/>
            <person name="Hoheisel J.D."/>
            <person name="Fartmann B."/>
            <person name="Nyakatura G."/>
            <person name="Kempken F."/>
            <person name="Maier J."/>
            <person name="Schulte U."/>
        </authorList>
    </citation>
    <scope>NUCLEOTIDE SEQUENCE [LARGE SCALE GENOMIC DNA]</scope>
    <source>
        <strain>ATCC 24698 / 74-OR23-1A / CBS 708.71 / DSM 1257 / FGSC 987</strain>
    </source>
</reference>
<reference key="2">
    <citation type="journal article" date="2003" name="Nature">
        <title>The genome sequence of the filamentous fungus Neurospora crassa.</title>
        <authorList>
            <person name="Galagan J.E."/>
            <person name="Calvo S.E."/>
            <person name="Borkovich K.A."/>
            <person name="Selker E.U."/>
            <person name="Read N.D."/>
            <person name="Jaffe D.B."/>
            <person name="FitzHugh W."/>
            <person name="Ma L.-J."/>
            <person name="Smirnov S."/>
            <person name="Purcell S."/>
            <person name="Rehman B."/>
            <person name="Elkins T."/>
            <person name="Engels R."/>
            <person name="Wang S."/>
            <person name="Nielsen C.B."/>
            <person name="Butler J."/>
            <person name="Endrizzi M."/>
            <person name="Qui D."/>
            <person name="Ianakiev P."/>
            <person name="Bell-Pedersen D."/>
            <person name="Nelson M.A."/>
            <person name="Werner-Washburne M."/>
            <person name="Selitrennikoff C.P."/>
            <person name="Kinsey J.A."/>
            <person name="Braun E.L."/>
            <person name="Zelter A."/>
            <person name="Schulte U."/>
            <person name="Kothe G.O."/>
            <person name="Jedd G."/>
            <person name="Mewes H.-W."/>
            <person name="Staben C."/>
            <person name="Marcotte E."/>
            <person name="Greenberg D."/>
            <person name="Roy A."/>
            <person name="Foley K."/>
            <person name="Naylor J."/>
            <person name="Stange-Thomann N."/>
            <person name="Barrett R."/>
            <person name="Gnerre S."/>
            <person name="Kamal M."/>
            <person name="Kamvysselis M."/>
            <person name="Mauceli E.W."/>
            <person name="Bielke C."/>
            <person name="Rudd S."/>
            <person name="Frishman D."/>
            <person name="Krystofova S."/>
            <person name="Rasmussen C."/>
            <person name="Metzenberg R.L."/>
            <person name="Perkins D.D."/>
            <person name="Kroken S."/>
            <person name="Cogoni C."/>
            <person name="Macino G."/>
            <person name="Catcheside D.E.A."/>
            <person name="Li W."/>
            <person name="Pratt R.J."/>
            <person name="Osmani S.A."/>
            <person name="DeSouza C.P.C."/>
            <person name="Glass N.L."/>
            <person name="Orbach M.J."/>
            <person name="Berglund J.A."/>
            <person name="Voelker R."/>
            <person name="Yarden O."/>
            <person name="Plamann M."/>
            <person name="Seiler S."/>
            <person name="Dunlap J.C."/>
            <person name="Radford A."/>
            <person name="Aramayo R."/>
            <person name="Natvig D.O."/>
            <person name="Alex L.A."/>
            <person name="Mannhaupt G."/>
            <person name="Ebbole D.J."/>
            <person name="Freitag M."/>
            <person name="Paulsen I."/>
            <person name="Sachs M.S."/>
            <person name="Lander E.S."/>
            <person name="Nusbaum C."/>
            <person name="Birren B.W."/>
        </authorList>
    </citation>
    <scope>NUCLEOTIDE SEQUENCE [LARGE SCALE GENOMIC DNA]</scope>
    <source>
        <strain>ATCC 24698 / 74-OR23-1A / CBS 708.71 / DSM 1257 / FGSC 987</strain>
    </source>
</reference>
<reference key="3">
    <citation type="journal article" date="2011" name="Fungal Genet. Biol.">
        <title>Gel-based mass spectrometric and computational approaches to the mitochondrial proteome of Neurospora.</title>
        <authorList>
            <person name="Keeping A."/>
            <person name="Deabreu D."/>
            <person name="Dibernardo M."/>
            <person name="Collins R.A."/>
        </authorList>
    </citation>
    <scope>SUBCELLULAR LOCATION [LARGE SCALE ANALYSIS]</scope>
    <scope>IDENTIFICATION BY MASS SPECTROMETRY</scope>
</reference>
<feature type="chain" id="PRO_0000158905" description="Adenylate kinase">
    <location>
        <begin position="1"/>
        <end position="278"/>
    </location>
</feature>
<feature type="region of interest" description="NMP" evidence="1">
    <location>
        <begin position="70"/>
        <end position="99"/>
    </location>
</feature>
<feature type="region of interest" description="LID" evidence="1">
    <location>
        <begin position="167"/>
        <end position="204"/>
    </location>
</feature>
<feature type="binding site" evidence="1">
    <location>
        <begin position="50"/>
        <end position="55"/>
    </location>
    <ligand>
        <name>ATP</name>
        <dbReference type="ChEBI" id="CHEBI:30616"/>
    </ligand>
</feature>
<feature type="binding site" evidence="1">
    <location>
        <position position="71"/>
    </location>
    <ligand>
        <name>AMP</name>
        <dbReference type="ChEBI" id="CHEBI:456215"/>
    </ligand>
</feature>
<feature type="binding site" evidence="1">
    <location>
        <position position="76"/>
    </location>
    <ligand>
        <name>AMP</name>
        <dbReference type="ChEBI" id="CHEBI:456215"/>
    </ligand>
</feature>
<feature type="binding site" evidence="1">
    <location>
        <begin position="97"/>
        <end position="99"/>
    </location>
    <ligand>
        <name>AMP</name>
        <dbReference type="ChEBI" id="CHEBI:456215"/>
    </ligand>
</feature>
<feature type="binding site" evidence="1">
    <location>
        <begin position="126"/>
        <end position="129"/>
    </location>
    <ligand>
        <name>AMP</name>
        <dbReference type="ChEBI" id="CHEBI:456215"/>
    </ligand>
</feature>
<feature type="binding site" evidence="1">
    <location>
        <position position="133"/>
    </location>
    <ligand>
        <name>AMP</name>
        <dbReference type="ChEBI" id="CHEBI:456215"/>
    </ligand>
</feature>
<feature type="binding site" evidence="1">
    <location>
        <position position="168"/>
    </location>
    <ligand>
        <name>ATP</name>
        <dbReference type="ChEBI" id="CHEBI:30616"/>
    </ligand>
</feature>
<feature type="binding site" evidence="1">
    <location>
        <begin position="177"/>
        <end position="178"/>
    </location>
    <ligand>
        <name>ATP</name>
        <dbReference type="ChEBI" id="CHEBI:30616"/>
    </ligand>
</feature>
<feature type="binding site" evidence="1">
    <location>
        <position position="201"/>
    </location>
    <ligand>
        <name>AMP</name>
        <dbReference type="ChEBI" id="CHEBI:456215"/>
    </ligand>
</feature>
<feature type="binding site" evidence="1">
    <location>
        <position position="212"/>
    </location>
    <ligand>
        <name>AMP</name>
        <dbReference type="ChEBI" id="CHEBI:456215"/>
    </ligand>
</feature>
<feature type="binding site" evidence="1">
    <location>
        <position position="240"/>
    </location>
    <ligand>
        <name>ATP</name>
        <dbReference type="ChEBI" id="CHEBI:30616"/>
    </ligand>
</feature>
<evidence type="ECO:0000255" key="1">
    <source>
        <dbReference type="HAMAP-Rule" id="MF_03168"/>
    </source>
</evidence>
<evidence type="ECO:0000269" key="2">
    <source>
    </source>
</evidence>
<organism>
    <name type="scientific">Neurospora crassa (strain ATCC 24698 / 74-OR23-1A / CBS 708.71 / DSM 1257 / FGSC 987)</name>
    <dbReference type="NCBI Taxonomy" id="367110"/>
    <lineage>
        <taxon>Eukaryota</taxon>
        <taxon>Fungi</taxon>
        <taxon>Dikarya</taxon>
        <taxon>Ascomycota</taxon>
        <taxon>Pezizomycotina</taxon>
        <taxon>Sordariomycetes</taxon>
        <taxon>Sordariomycetidae</taxon>
        <taxon>Sordariales</taxon>
        <taxon>Sordariaceae</taxon>
        <taxon>Neurospora</taxon>
    </lineage>
</organism>
<dbReference type="EC" id="2.7.4.3" evidence="1"/>
<dbReference type="EMBL" id="AL451012">
    <property type="protein sequence ID" value="CAC18138.2"/>
    <property type="molecule type" value="Genomic_DNA"/>
</dbReference>
<dbReference type="EMBL" id="CM002237">
    <property type="protein sequence ID" value="EAA27017.3"/>
    <property type="molecule type" value="Genomic_DNA"/>
</dbReference>
<dbReference type="RefSeq" id="XP_956253.3">
    <property type="nucleotide sequence ID" value="XM_951160.3"/>
</dbReference>
<dbReference type="SMR" id="Q9HE76"/>
<dbReference type="FunCoup" id="Q9HE76">
    <property type="interactions" value="803"/>
</dbReference>
<dbReference type="STRING" id="367110.Q9HE76"/>
<dbReference type="PaxDb" id="5141-EFNCRP00000001658"/>
<dbReference type="EnsemblFungi" id="EAA27017">
    <property type="protein sequence ID" value="EAA27017"/>
    <property type="gene ID" value="NCU01550"/>
</dbReference>
<dbReference type="GeneID" id="3872391"/>
<dbReference type="KEGG" id="ncr:NCU01550"/>
<dbReference type="VEuPathDB" id="FungiDB:NCU01550"/>
<dbReference type="HOGENOM" id="CLU_032354_1_0_1"/>
<dbReference type="InParanoid" id="Q9HE76"/>
<dbReference type="OrthoDB" id="439792at2759"/>
<dbReference type="Proteomes" id="UP000001805">
    <property type="component" value="Chromosome 6, Linkage Group II"/>
</dbReference>
<dbReference type="GO" id="GO:0005737">
    <property type="term" value="C:cytoplasm"/>
    <property type="evidence" value="ECO:0000318"/>
    <property type="project" value="GO_Central"/>
</dbReference>
<dbReference type="GO" id="GO:0005829">
    <property type="term" value="C:cytosol"/>
    <property type="evidence" value="ECO:0007669"/>
    <property type="project" value="UniProtKB-SubCell"/>
</dbReference>
<dbReference type="GO" id="GO:0005758">
    <property type="term" value="C:mitochondrial intermembrane space"/>
    <property type="evidence" value="ECO:0007669"/>
    <property type="project" value="UniProtKB-SubCell"/>
</dbReference>
<dbReference type="GO" id="GO:0005739">
    <property type="term" value="C:mitochondrion"/>
    <property type="evidence" value="ECO:0000318"/>
    <property type="project" value="GO_Central"/>
</dbReference>
<dbReference type="GO" id="GO:0004017">
    <property type="term" value="F:adenylate kinase activity"/>
    <property type="evidence" value="ECO:0000318"/>
    <property type="project" value="GO_Central"/>
</dbReference>
<dbReference type="GO" id="GO:0016208">
    <property type="term" value="F:AMP binding"/>
    <property type="evidence" value="ECO:0007669"/>
    <property type="project" value="EnsemblFungi"/>
</dbReference>
<dbReference type="GO" id="GO:0005524">
    <property type="term" value="F:ATP binding"/>
    <property type="evidence" value="ECO:0007669"/>
    <property type="project" value="UniProtKB-KW"/>
</dbReference>
<dbReference type="GO" id="GO:0003688">
    <property type="term" value="F:DNA replication origin binding"/>
    <property type="evidence" value="ECO:0007669"/>
    <property type="project" value="EnsemblFungi"/>
</dbReference>
<dbReference type="GO" id="GO:0006172">
    <property type="term" value="P:ADP biosynthetic process"/>
    <property type="evidence" value="ECO:0000318"/>
    <property type="project" value="GO_Central"/>
</dbReference>
<dbReference type="GO" id="GO:0046033">
    <property type="term" value="P:AMP metabolic process"/>
    <property type="evidence" value="ECO:0007669"/>
    <property type="project" value="UniProtKB-UniRule"/>
</dbReference>
<dbReference type="GO" id="GO:0046034">
    <property type="term" value="P:ATP metabolic process"/>
    <property type="evidence" value="ECO:0007669"/>
    <property type="project" value="UniProtKB-UniRule"/>
</dbReference>
<dbReference type="GO" id="GO:0006270">
    <property type="term" value="P:DNA replication initiation"/>
    <property type="evidence" value="ECO:0007669"/>
    <property type="project" value="EnsemblFungi"/>
</dbReference>
<dbReference type="GO" id="GO:0036388">
    <property type="term" value="P:pre-replicative complex assembly"/>
    <property type="evidence" value="ECO:0007669"/>
    <property type="project" value="EnsemblFungi"/>
</dbReference>
<dbReference type="CDD" id="cd01428">
    <property type="entry name" value="ADK"/>
    <property type="match status" value="1"/>
</dbReference>
<dbReference type="FunFam" id="3.40.50.300:FF:000106">
    <property type="entry name" value="Adenylate kinase mitochondrial"/>
    <property type="match status" value="1"/>
</dbReference>
<dbReference type="Gene3D" id="3.40.50.300">
    <property type="entry name" value="P-loop containing nucleotide triphosphate hydrolases"/>
    <property type="match status" value="1"/>
</dbReference>
<dbReference type="HAMAP" id="MF_00235">
    <property type="entry name" value="Adenylate_kinase_Adk"/>
    <property type="match status" value="1"/>
</dbReference>
<dbReference type="HAMAP" id="MF_03168">
    <property type="entry name" value="Adenylate_kinase_AK2"/>
    <property type="match status" value="1"/>
</dbReference>
<dbReference type="InterPro" id="IPR006259">
    <property type="entry name" value="Adenyl_kin_sub"/>
</dbReference>
<dbReference type="InterPro" id="IPR000850">
    <property type="entry name" value="Adenylat/UMP-CMP_kin"/>
</dbReference>
<dbReference type="InterPro" id="IPR033690">
    <property type="entry name" value="Adenylat_kinase_CS"/>
</dbReference>
<dbReference type="InterPro" id="IPR007862">
    <property type="entry name" value="Adenylate_kinase_lid-dom"/>
</dbReference>
<dbReference type="InterPro" id="IPR028587">
    <property type="entry name" value="AK2"/>
</dbReference>
<dbReference type="InterPro" id="IPR027417">
    <property type="entry name" value="P-loop_NTPase"/>
</dbReference>
<dbReference type="NCBIfam" id="TIGR01351">
    <property type="entry name" value="adk"/>
    <property type="match status" value="1"/>
</dbReference>
<dbReference type="NCBIfam" id="NF001380">
    <property type="entry name" value="PRK00279.1-2"/>
    <property type="match status" value="1"/>
</dbReference>
<dbReference type="NCBIfam" id="NF001381">
    <property type="entry name" value="PRK00279.1-3"/>
    <property type="match status" value="1"/>
</dbReference>
<dbReference type="NCBIfam" id="NF011100">
    <property type="entry name" value="PRK14527.1"/>
    <property type="match status" value="1"/>
</dbReference>
<dbReference type="PANTHER" id="PTHR23359">
    <property type="entry name" value="NUCLEOTIDE KINASE"/>
    <property type="match status" value="1"/>
</dbReference>
<dbReference type="Pfam" id="PF00406">
    <property type="entry name" value="ADK"/>
    <property type="match status" value="1"/>
</dbReference>
<dbReference type="Pfam" id="PF05191">
    <property type="entry name" value="ADK_lid"/>
    <property type="match status" value="1"/>
</dbReference>
<dbReference type="PRINTS" id="PR00094">
    <property type="entry name" value="ADENYLTKNASE"/>
</dbReference>
<dbReference type="SUPFAM" id="SSF52540">
    <property type="entry name" value="P-loop containing nucleoside triphosphate hydrolases"/>
    <property type="match status" value="1"/>
</dbReference>
<dbReference type="PROSITE" id="PS00113">
    <property type="entry name" value="ADENYLATE_KINASE"/>
    <property type="match status" value="1"/>
</dbReference>
<protein>
    <recommendedName>
        <fullName evidence="1">Adenylate kinase</fullName>
        <ecNumber evidence="1">2.7.4.3</ecNumber>
    </recommendedName>
    <alternativeName>
        <fullName evidence="1">ATP-AMP transphosphorylase</fullName>
    </alternativeName>
    <alternativeName>
        <fullName evidence="1">ATP:AMP phosphotransferase</fullName>
    </alternativeName>
    <alternativeName>
        <fullName evidence="1">Adenylate kinase cytosolic and mitochondrial</fullName>
    </alternativeName>
    <alternativeName>
        <fullName evidence="1">Adenylate monophosphate kinase</fullName>
    </alternativeName>
</protein>
<accession>Q9HE76</accession>
<accession>Q7RWY7</accession>